<dbReference type="EC" id="4.2.1.19" evidence="1"/>
<dbReference type="EMBL" id="CP000325">
    <property type="protein sequence ID" value="ABL04085.1"/>
    <property type="molecule type" value="Genomic_DNA"/>
</dbReference>
<dbReference type="RefSeq" id="WP_011739705.1">
    <property type="nucleotide sequence ID" value="NC_008611.1"/>
</dbReference>
<dbReference type="SMR" id="A0PP16"/>
<dbReference type="GeneID" id="34344143"/>
<dbReference type="KEGG" id="mul:MUL_1574"/>
<dbReference type="eggNOG" id="COG0131">
    <property type="taxonomic scope" value="Bacteria"/>
</dbReference>
<dbReference type="HOGENOM" id="CLU_044308_3_0_11"/>
<dbReference type="UniPathway" id="UPA00031">
    <property type="reaction ID" value="UER00011"/>
</dbReference>
<dbReference type="Proteomes" id="UP000000765">
    <property type="component" value="Chromosome"/>
</dbReference>
<dbReference type="GO" id="GO:0005737">
    <property type="term" value="C:cytoplasm"/>
    <property type="evidence" value="ECO:0007669"/>
    <property type="project" value="UniProtKB-SubCell"/>
</dbReference>
<dbReference type="GO" id="GO:0004424">
    <property type="term" value="F:imidazoleglycerol-phosphate dehydratase activity"/>
    <property type="evidence" value="ECO:0007669"/>
    <property type="project" value="UniProtKB-UniRule"/>
</dbReference>
<dbReference type="GO" id="GO:0000105">
    <property type="term" value="P:L-histidine biosynthetic process"/>
    <property type="evidence" value="ECO:0007669"/>
    <property type="project" value="UniProtKB-UniRule"/>
</dbReference>
<dbReference type="CDD" id="cd07914">
    <property type="entry name" value="IGPD"/>
    <property type="match status" value="1"/>
</dbReference>
<dbReference type="FunFam" id="3.30.230.40:FF:000001">
    <property type="entry name" value="Imidazoleglycerol-phosphate dehydratase HisB"/>
    <property type="match status" value="1"/>
</dbReference>
<dbReference type="FunFam" id="3.30.230.40:FF:000003">
    <property type="entry name" value="Imidazoleglycerol-phosphate dehydratase HisB"/>
    <property type="match status" value="1"/>
</dbReference>
<dbReference type="Gene3D" id="3.30.230.40">
    <property type="entry name" value="Imidazole glycerol phosphate dehydratase, domain 1"/>
    <property type="match status" value="2"/>
</dbReference>
<dbReference type="HAMAP" id="MF_00076">
    <property type="entry name" value="HisB"/>
    <property type="match status" value="1"/>
</dbReference>
<dbReference type="InterPro" id="IPR038494">
    <property type="entry name" value="IGPD_sf"/>
</dbReference>
<dbReference type="InterPro" id="IPR000807">
    <property type="entry name" value="ImidazoleglycerolP_deHydtase"/>
</dbReference>
<dbReference type="InterPro" id="IPR020565">
    <property type="entry name" value="ImidazoleglycerP_deHydtase_CS"/>
</dbReference>
<dbReference type="InterPro" id="IPR020568">
    <property type="entry name" value="Ribosomal_Su5_D2-typ_SF"/>
</dbReference>
<dbReference type="NCBIfam" id="NF002110">
    <property type="entry name" value="PRK00951.1-6"/>
    <property type="match status" value="1"/>
</dbReference>
<dbReference type="NCBIfam" id="NF002111">
    <property type="entry name" value="PRK00951.2-1"/>
    <property type="match status" value="1"/>
</dbReference>
<dbReference type="NCBIfam" id="NF002114">
    <property type="entry name" value="PRK00951.2-4"/>
    <property type="match status" value="1"/>
</dbReference>
<dbReference type="PANTHER" id="PTHR23133:SF2">
    <property type="entry name" value="IMIDAZOLEGLYCEROL-PHOSPHATE DEHYDRATASE"/>
    <property type="match status" value="1"/>
</dbReference>
<dbReference type="PANTHER" id="PTHR23133">
    <property type="entry name" value="IMIDAZOLEGLYCEROL-PHOSPHATE DEHYDRATASE HIS7"/>
    <property type="match status" value="1"/>
</dbReference>
<dbReference type="Pfam" id="PF00475">
    <property type="entry name" value="IGPD"/>
    <property type="match status" value="1"/>
</dbReference>
<dbReference type="SUPFAM" id="SSF54211">
    <property type="entry name" value="Ribosomal protein S5 domain 2-like"/>
    <property type="match status" value="2"/>
</dbReference>
<dbReference type="PROSITE" id="PS00954">
    <property type="entry name" value="IGP_DEHYDRATASE_1"/>
    <property type="match status" value="1"/>
</dbReference>
<dbReference type="PROSITE" id="PS00955">
    <property type="entry name" value="IGP_DEHYDRATASE_2"/>
    <property type="match status" value="1"/>
</dbReference>
<gene>
    <name evidence="1" type="primary">hisB</name>
    <name type="ordered locus">MUL_1574</name>
</gene>
<reference key="1">
    <citation type="journal article" date="2007" name="Genome Res.">
        <title>Reductive evolution and niche adaptation inferred from the genome of Mycobacterium ulcerans, the causative agent of Buruli ulcer.</title>
        <authorList>
            <person name="Stinear T.P."/>
            <person name="Seemann T."/>
            <person name="Pidot S."/>
            <person name="Frigui W."/>
            <person name="Reysset G."/>
            <person name="Garnier T."/>
            <person name="Meurice G."/>
            <person name="Simon D."/>
            <person name="Bouchier C."/>
            <person name="Ma L."/>
            <person name="Tichit M."/>
            <person name="Porter J.L."/>
            <person name="Ryan J."/>
            <person name="Johnson P.D.R."/>
            <person name="Davies J.K."/>
            <person name="Jenkin G.A."/>
            <person name="Small P.L.C."/>
            <person name="Jones L.M."/>
            <person name="Tekaia F."/>
            <person name="Laval F."/>
            <person name="Daffe M."/>
            <person name="Parkhill J."/>
            <person name="Cole S.T."/>
        </authorList>
    </citation>
    <scope>NUCLEOTIDE SEQUENCE [LARGE SCALE GENOMIC DNA]</scope>
    <source>
        <strain>Agy99</strain>
    </source>
</reference>
<comment type="catalytic activity">
    <reaction evidence="1">
        <text>D-erythro-1-(imidazol-4-yl)glycerol 3-phosphate = 3-(imidazol-4-yl)-2-oxopropyl phosphate + H2O</text>
        <dbReference type="Rhea" id="RHEA:11040"/>
        <dbReference type="ChEBI" id="CHEBI:15377"/>
        <dbReference type="ChEBI" id="CHEBI:57766"/>
        <dbReference type="ChEBI" id="CHEBI:58278"/>
        <dbReference type="EC" id="4.2.1.19"/>
    </reaction>
</comment>
<comment type="pathway">
    <text evidence="1">Amino-acid biosynthesis; L-histidine biosynthesis; L-histidine from 5-phospho-alpha-D-ribose 1-diphosphate: step 6/9.</text>
</comment>
<comment type="subcellular location">
    <subcellularLocation>
        <location evidence="1">Cytoplasm</location>
    </subcellularLocation>
</comment>
<comment type="similarity">
    <text evidence="1">Belongs to the imidazoleglycerol-phosphate dehydratase family.</text>
</comment>
<protein>
    <recommendedName>
        <fullName evidence="1">Imidazoleglycerol-phosphate dehydratase</fullName>
        <shortName evidence="1">IGPD</shortName>
        <ecNumber evidence="1">4.2.1.19</ecNumber>
    </recommendedName>
</protein>
<feature type="chain" id="PRO_1000010306" description="Imidazoleglycerol-phosphate dehydratase">
    <location>
        <begin position="1"/>
        <end position="210"/>
    </location>
</feature>
<name>HIS7_MYCUA</name>
<sequence length="210" mass="22869">MTATETGTAVRRARIERRTRESDIVIDLDLDGTGQVDVDTGVPFFDHMLTALGSHASFDLTVRTKGDVEIEAHHTVEDTAIALGQALGQALGDKKGIRRFGDAFIPMDETLAHAAVDVSGRPYCVHTGEPDHLQHTTIAGNSVPYHTVINRHVFESLAMNARIALHVRVLYGRDPHHITEAQYKAVARALRQAVEPDPRVSGVPSTKGVL</sequence>
<proteinExistence type="inferred from homology"/>
<keyword id="KW-0028">Amino-acid biosynthesis</keyword>
<keyword id="KW-0963">Cytoplasm</keyword>
<keyword id="KW-0368">Histidine biosynthesis</keyword>
<keyword id="KW-0456">Lyase</keyword>
<organism>
    <name type="scientific">Mycobacterium ulcerans (strain Agy99)</name>
    <dbReference type="NCBI Taxonomy" id="362242"/>
    <lineage>
        <taxon>Bacteria</taxon>
        <taxon>Bacillati</taxon>
        <taxon>Actinomycetota</taxon>
        <taxon>Actinomycetes</taxon>
        <taxon>Mycobacteriales</taxon>
        <taxon>Mycobacteriaceae</taxon>
        <taxon>Mycobacterium</taxon>
        <taxon>Mycobacterium ulcerans group</taxon>
    </lineage>
</organism>
<accession>A0PP16</accession>
<evidence type="ECO:0000255" key="1">
    <source>
        <dbReference type="HAMAP-Rule" id="MF_00076"/>
    </source>
</evidence>